<feature type="chain" id="PRO_0000118568" description="NADH-quinone oxidoreductase subunit F">
    <location>
        <begin position="1"/>
        <end position="445"/>
    </location>
</feature>
<feature type="binding site" evidence="1">
    <location>
        <begin position="61"/>
        <end position="70"/>
    </location>
    <ligand>
        <name>NAD(+)</name>
        <dbReference type="ChEBI" id="CHEBI:57540"/>
    </ligand>
</feature>
<feature type="binding site" evidence="1">
    <location>
        <begin position="174"/>
        <end position="221"/>
    </location>
    <ligand>
        <name>FMN</name>
        <dbReference type="ChEBI" id="CHEBI:58210"/>
    </ligand>
</feature>
<feature type="binding site" evidence="2">
    <location>
        <position position="351"/>
    </location>
    <ligand>
        <name>[4Fe-4S] cluster</name>
        <dbReference type="ChEBI" id="CHEBI:49883"/>
    </ligand>
</feature>
<feature type="binding site" evidence="2">
    <location>
        <position position="354"/>
    </location>
    <ligand>
        <name>[4Fe-4S] cluster</name>
        <dbReference type="ChEBI" id="CHEBI:49883"/>
    </ligand>
</feature>
<feature type="binding site" evidence="2">
    <location>
        <position position="357"/>
    </location>
    <ligand>
        <name>[4Fe-4S] cluster</name>
        <dbReference type="ChEBI" id="CHEBI:49883"/>
    </ligand>
</feature>
<feature type="binding site" evidence="2">
    <location>
        <position position="398"/>
    </location>
    <ligand>
        <name>[4Fe-4S] cluster</name>
        <dbReference type="ChEBI" id="CHEBI:49883"/>
    </ligand>
</feature>
<feature type="sequence conflict" description="In Ref. 6; AAA53584." evidence="3" ref="6">
    <original>NIIRTPETH</original>
    <variation>KHYPYSRND</variation>
    <location>
        <begin position="3"/>
        <end position="11"/>
    </location>
</feature>
<feature type="sequence conflict" description="In Ref. 1; CAA48365." evidence="3" ref="1">
    <original>L</original>
    <variation>R</variation>
    <location>
        <position position="26"/>
    </location>
</feature>
<feature type="sequence conflict" description="In Ref. 6; AAA53584." evidence="3" ref="6">
    <original>A</original>
    <variation>R</variation>
    <location>
        <position position="38"/>
    </location>
</feature>
<feature type="sequence conflict" description="In Ref. 1; CAA48365." evidence="3" ref="1">
    <original>A</original>
    <variation>R</variation>
    <location>
        <position position="41"/>
    </location>
</feature>
<feature type="sequence conflict" description="In Ref. 6; AAA53584." evidence="3" ref="6">
    <original>V</original>
    <variation>I</variation>
    <location>
        <position position="51"/>
    </location>
</feature>
<feature type="sequence conflict" description="In Ref. 1 and 2." evidence="3" ref="1 2">
    <original>A</original>
    <variation>R</variation>
    <location>
        <position position="370"/>
    </location>
</feature>
<feature type="turn" evidence="5">
    <location>
        <begin position="8"/>
        <end position="10"/>
    </location>
</feature>
<feature type="turn" evidence="5">
    <location>
        <begin position="12"/>
        <end position="16"/>
    </location>
</feature>
<feature type="helix" evidence="5">
    <location>
        <begin position="26"/>
        <end position="31"/>
    </location>
</feature>
<feature type="turn" evidence="8">
    <location>
        <begin position="32"/>
        <end position="35"/>
    </location>
</feature>
<feature type="helix" evidence="5">
    <location>
        <begin position="36"/>
        <end position="42"/>
    </location>
</feature>
<feature type="helix" evidence="5">
    <location>
        <begin position="47"/>
        <end position="57"/>
    </location>
</feature>
<feature type="strand" evidence="5">
    <location>
        <begin position="62"/>
        <end position="65"/>
    </location>
</feature>
<feature type="helix" evidence="5">
    <location>
        <begin position="69"/>
        <end position="73"/>
    </location>
</feature>
<feature type="strand" evidence="5">
    <location>
        <begin position="86"/>
        <end position="91"/>
    </location>
</feature>
<feature type="helix" evidence="5">
    <location>
        <begin position="100"/>
        <end position="107"/>
    </location>
</feature>
<feature type="helix" evidence="5">
    <location>
        <begin position="109"/>
        <end position="123"/>
    </location>
</feature>
<feature type="strand" evidence="5">
    <location>
        <begin position="126"/>
        <end position="132"/>
    </location>
</feature>
<feature type="helix" evidence="5">
    <location>
        <begin position="137"/>
        <end position="151"/>
    </location>
</feature>
<feature type="turn" evidence="5">
    <location>
        <begin position="152"/>
        <end position="154"/>
    </location>
</feature>
<feature type="strand" evidence="5">
    <location>
        <begin position="155"/>
        <end position="159"/>
    </location>
</feature>
<feature type="helix" evidence="5">
    <location>
        <begin position="160"/>
        <end position="162"/>
    </location>
</feature>
<feature type="strand" evidence="5">
    <location>
        <begin position="167"/>
        <end position="173"/>
    </location>
</feature>
<feature type="helix" evidence="5">
    <location>
        <begin position="178"/>
        <end position="181"/>
    </location>
</feature>
<feature type="helix" evidence="5">
    <location>
        <begin position="183"/>
        <end position="190"/>
    </location>
</feature>
<feature type="strand" evidence="5">
    <location>
        <begin position="200"/>
        <end position="202"/>
    </location>
</feature>
<feature type="turn" evidence="5">
    <location>
        <begin position="204"/>
        <end position="206"/>
    </location>
</feature>
<feature type="helix" evidence="5">
    <location>
        <begin position="209"/>
        <end position="211"/>
    </location>
</feature>
<feature type="strand" evidence="5">
    <location>
        <begin position="214"/>
        <end position="218"/>
    </location>
</feature>
<feature type="helix" evidence="5">
    <location>
        <begin position="219"/>
        <end position="231"/>
    </location>
</feature>
<feature type="helix" evidence="5">
    <location>
        <begin position="233"/>
        <end position="237"/>
    </location>
</feature>
<feature type="strand" evidence="5">
    <location>
        <begin position="239"/>
        <end position="244"/>
    </location>
</feature>
<feature type="strand" evidence="5">
    <location>
        <begin position="246"/>
        <end position="258"/>
    </location>
</feature>
<feature type="strand" evidence="5">
    <location>
        <begin position="260"/>
        <end position="265"/>
    </location>
</feature>
<feature type="helix" evidence="5">
    <location>
        <begin position="270"/>
        <end position="275"/>
    </location>
</feature>
<feature type="turn" evidence="7">
    <location>
        <begin position="276"/>
        <end position="278"/>
    </location>
</feature>
<feature type="strand" evidence="5">
    <location>
        <begin position="287"/>
        <end position="294"/>
    </location>
</feature>
<feature type="helix" evidence="5">
    <location>
        <begin position="302"/>
        <end position="304"/>
    </location>
</feature>
<feature type="strand" evidence="5">
    <location>
        <begin position="306"/>
        <end position="308"/>
    </location>
</feature>
<feature type="helix" evidence="5">
    <location>
        <begin position="311"/>
        <end position="315"/>
    </location>
</feature>
<feature type="turn" evidence="5">
    <location>
        <begin position="316"/>
        <end position="318"/>
    </location>
</feature>
<feature type="strand" evidence="5">
    <location>
        <begin position="324"/>
        <end position="330"/>
    </location>
</feature>
<feature type="helix" evidence="5">
    <location>
        <begin position="335"/>
        <end position="348"/>
    </location>
</feature>
<feature type="strand" evidence="6">
    <location>
        <begin position="352"/>
        <end position="354"/>
    </location>
</feature>
<feature type="helix" evidence="5">
    <location>
        <begin position="355"/>
        <end position="358"/>
    </location>
</feature>
<feature type="helix" evidence="5">
    <location>
        <begin position="360"/>
        <end position="373"/>
    </location>
</feature>
<feature type="helix" evidence="5">
    <location>
        <begin position="380"/>
        <end position="390"/>
    </location>
</feature>
<feature type="turn" evidence="5">
    <location>
        <begin position="393"/>
        <end position="395"/>
    </location>
</feature>
<feature type="strand" evidence="5">
    <location>
        <begin position="396"/>
        <end position="399"/>
    </location>
</feature>
<feature type="helix" evidence="5">
    <location>
        <begin position="400"/>
        <end position="414"/>
    </location>
</feature>
<feature type="helix" evidence="5">
    <location>
        <begin position="416"/>
        <end position="421"/>
    </location>
</feature>
<feature type="strand" evidence="4">
    <location>
        <begin position="434"/>
        <end position="436"/>
    </location>
</feature>
<dbReference type="EC" id="7.1.1.-"/>
<dbReference type="EMBL" id="X68301">
    <property type="protein sequence ID" value="CAA48365.1"/>
    <property type="molecule type" value="Genomic_DNA"/>
</dbReference>
<dbReference type="EMBL" id="L25055">
    <property type="protein sequence ID" value="AAA03537.1"/>
    <property type="molecule type" value="Unassigned_DNA"/>
</dbReference>
<dbReference type="EMBL" id="U00096">
    <property type="protein sequence ID" value="AAC75344.1"/>
    <property type="molecule type" value="Genomic_DNA"/>
</dbReference>
<dbReference type="EMBL" id="AP009048">
    <property type="protein sequence ID" value="BAA16113.1"/>
    <property type="molecule type" value="Genomic_DNA"/>
</dbReference>
<dbReference type="EMBL" id="L19569">
    <property type="protein sequence ID" value="AAA53584.1"/>
    <property type="molecule type" value="Genomic_DNA"/>
</dbReference>
<dbReference type="PIR" id="B65000">
    <property type="entry name" value="B65000"/>
</dbReference>
<dbReference type="RefSeq" id="NP_416787.1">
    <property type="nucleotide sequence ID" value="NC_000913.3"/>
</dbReference>
<dbReference type="RefSeq" id="WP_000789500.1">
    <property type="nucleotide sequence ID" value="NZ_LN832404.1"/>
</dbReference>
<dbReference type="PDB" id="7AWT">
    <property type="method" value="EM"/>
    <property type="resolution" value="2.73 A"/>
    <property type="chains" value="F=1-445"/>
</dbReference>
<dbReference type="PDB" id="7NYR">
    <property type="method" value="EM"/>
    <property type="resolution" value="3.30 A"/>
    <property type="chains" value="F=1-445"/>
</dbReference>
<dbReference type="PDB" id="7NYU">
    <property type="method" value="EM"/>
    <property type="resolution" value="3.80 A"/>
    <property type="chains" value="F=1-445"/>
</dbReference>
<dbReference type="PDB" id="7NYV">
    <property type="method" value="EM"/>
    <property type="resolution" value="3.70 A"/>
    <property type="chains" value="F=1-445"/>
</dbReference>
<dbReference type="PDB" id="7NZ1">
    <property type="method" value="EM"/>
    <property type="resolution" value="2.10 A"/>
    <property type="chains" value="F=1-445"/>
</dbReference>
<dbReference type="PDB" id="7P61">
    <property type="method" value="EM"/>
    <property type="resolution" value="3.20 A"/>
    <property type="chains" value="F=1-442"/>
</dbReference>
<dbReference type="PDB" id="7P62">
    <property type="method" value="EM"/>
    <property type="resolution" value="3.60 A"/>
    <property type="chains" value="F=1-442"/>
</dbReference>
<dbReference type="PDB" id="7P63">
    <property type="method" value="EM"/>
    <property type="resolution" value="3.40 A"/>
    <property type="chains" value="F=1-445"/>
</dbReference>
<dbReference type="PDB" id="7P64">
    <property type="method" value="EM"/>
    <property type="resolution" value="2.50 A"/>
    <property type="chains" value="F=4-442"/>
</dbReference>
<dbReference type="PDB" id="7P69">
    <property type="method" value="EM"/>
    <property type="resolution" value="3.00 A"/>
    <property type="chains" value="F=1-442"/>
</dbReference>
<dbReference type="PDB" id="7P7C">
    <property type="method" value="EM"/>
    <property type="resolution" value="2.40 A"/>
    <property type="chains" value="F=4-442"/>
</dbReference>
<dbReference type="PDB" id="7P7E">
    <property type="method" value="EM"/>
    <property type="resolution" value="2.70 A"/>
    <property type="chains" value="F=1-442"/>
</dbReference>
<dbReference type="PDB" id="7P7J">
    <property type="method" value="EM"/>
    <property type="resolution" value="2.70 A"/>
    <property type="chains" value="F=4-442"/>
</dbReference>
<dbReference type="PDB" id="7P7K">
    <property type="method" value="EM"/>
    <property type="resolution" value="3.10 A"/>
    <property type="chains" value="F=4-442"/>
</dbReference>
<dbReference type="PDB" id="7P7L">
    <property type="method" value="EM"/>
    <property type="resolution" value="3.00 A"/>
    <property type="chains" value="F=4-442"/>
</dbReference>
<dbReference type="PDB" id="7P7M">
    <property type="method" value="EM"/>
    <property type="resolution" value="3.20 A"/>
    <property type="chains" value="F=4-442"/>
</dbReference>
<dbReference type="PDB" id="7Z7R">
    <property type="method" value="EM"/>
    <property type="resolution" value="3.36 A"/>
    <property type="chains" value="F=1-445"/>
</dbReference>
<dbReference type="PDB" id="7Z7S">
    <property type="method" value="EM"/>
    <property type="resolution" value="2.40 A"/>
    <property type="chains" value="F=1-445"/>
</dbReference>
<dbReference type="PDB" id="7Z7T">
    <property type="method" value="EM"/>
    <property type="resolution" value="3.10 A"/>
    <property type="chains" value="F=1-445"/>
</dbReference>
<dbReference type="PDB" id="7Z7V">
    <property type="method" value="EM"/>
    <property type="resolution" value="2.29 A"/>
    <property type="chains" value="F=1-445"/>
</dbReference>
<dbReference type="PDB" id="7Z80">
    <property type="method" value="EM"/>
    <property type="resolution" value="2.93 A"/>
    <property type="chains" value="F=1-445"/>
</dbReference>
<dbReference type="PDB" id="7Z83">
    <property type="method" value="EM"/>
    <property type="resolution" value="2.88 A"/>
    <property type="chains" value="F=1-445"/>
</dbReference>
<dbReference type="PDB" id="7Z84">
    <property type="method" value="EM"/>
    <property type="resolution" value="2.87 A"/>
    <property type="chains" value="F=1-445"/>
</dbReference>
<dbReference type="PDB" id="7ZC5">
    <property type="method" value="EM"/>
    <property type="resolution" value="3.00 A"/>
    <property type="chains" value="F=1-445"/>
</dbReference>
<dbReference type="PDB" id="7ZCI">
    <property type="method" value="EM"/>
    <property type="resolution" value="2.69 A"/>
    <property type="chains" value="F=1-445"/>
</dbReference>
<dbReference type="PDBsum" id="7AWT"/>
<dbReference type="PDBsum" id="7NYR"/>
<dbReference type="PDBsum" id="7NYU"/>
<dbReference type="PDBsum" id="7NYV"/>
<dbReference type="PDBsum" id="7NZ1"/>
<dbReference type="PDBsum" id="7P61"/>
<dbReference type="PDBsum" id="7P62"/>
<dbReference type="PDBsum" id="7P63"/>
<dbReference type="PDBsum" id="7P64"/>
<dbReference type="PDBsum" id="7P69"/>
<dbReference type="PDBsum" id="7P7C"/>
<dbReference type="PDBsum" id="7P7E"/>
<dbReference type="PDBsum" id="7P7J"/>
<dbReference type="PDBsum" id="7P7K"/>
<dbReference type="PDBsum" id="7P7L"/>
<dbReference type="PDBsum" id="7P7M"/>
<dbReference type="PDBsum" id="7Z7R"/>
<dbReference type="PDBsum" id="7Z7S"/>
<dbReference type="PDBsum" id="7Z7T"/>
<dbReference type="PDBsum" id="7Z7V"/>
<dbReference type="PDBsum" id="7Z80"/>
<dbReference type="PDBsum" id="7Z83"/>
<dbReference type="PDBsum" id="7Z84"/>
<dbReference type="PDBsum" id="7ZC5"/>
<dbReference type="PDBsum" id="7ZCI"/>
<dbReference type="EMDB" id="EMD-12653"/>
<dbReference type="EMDB" id="EMD-12654"/>
<dbReference type="EMDB" id="EMD-12655"/>
<dbReference type="EMDB" id="EMD-12661"/>
<dbReference type="SMR" id="P31979"/>
<dbReference type="BioGRID" id="4260513">
    <property type="interactions" value="71"/>
</dbReference>
<dbReference type="ComplexPortal" id="CPX-243">
    <property type="entry name" value="Respiratory chain complex I"/>
</dbReference>
<dbReference type="DIP" id="DIP-10382N"/>
<dbReference type="FunCoup" id="P31979">
    <property type="interactions" value="701"/>
</dbReference>
<dbReference type="IntAct" id="P31979">
    <property type="interactions" value="7"/>
</dbReference>
<dbReference type="STRING" id="511145.b2284"/>
<dbReference type="TCDB" id="3.D.1.1.1">
    <property type="family name" value="the h+ or na+-translocating nadh dehydrogenase (ndh) family"/>
</dbReference>
<dbReference type="jPOST" id="P31979"/>
<dbReference type="PaxDb" id="511145-b2284"/>
<dbReference type="EnsemblBacteria" id="AAC75344">
    <property type="protein sequence ID" value="AAC75344"/>
    <property type="gene ID" value="b2284"/>
</dbReference>
<dbReference type="GeneID" id="946753"/>
<dbReference type="KEGG" id="ecj:JW2279"/>
<dbReference type="KEGG" id="eco:b2284"/>
<dbReference type="KEGG" id="ecoc:C3026_12745"/>
<dbReference type="PATRIC" id="fig|1411691.4.peg.4452"/>
<dbReference type="EchoBASE" id="EB1723"/>
<dbReference type="eggNOG" id="COG1894">
    <property type="taxonomic scope" value="Bacteria"/>
</dbReference>
<dbReference type="HOGENOM" id="CLU_014881_0_1_6"/>
<dbReference type="InParanoid" id="P31979"/>
<dbReference type="OMA" id="QGDGKPH"/>
<dbReference type="OrthoDB" id="9805533at2"/>
<dbReference type="PhylomeDB" id="P31979"/>
<dbReference type="BioCyc" id="EcoCyc:NUOF-MONOMER"/>
<dbReference type="BioCyc" id="MetaCyc:NUOF-MONOMER"/>
<dbReference type="PRO" id="PR:P31979"/>
<dbReference type="Proteomes" id="UP000000625">
    <property type="component" value="Chromosome"/>
</dbReference>
<dbReference type="GO" id="GO:0016020">
    <property type="term" value="C:membrane"/>
    <property type="evidence" value="ECO:0000314"/>
    <property type="project" value="ComplexPortal"/>
</dbReference>
<dbReference type="GO" id="GO:0030964">
    <property type="term" value="C:NADH dehydrogenase complex"/>
    <property type="evidence" value="ECO:0000314"/>
    <property type="project" value="EcoliWiki"/>
</dbReference>
<dbReference type="GO" id="GO:0005886">
    <property type="term" value="C:plasma membrane"/>
    <property type="evidence" value="ECO:0000314"/>
    <property type="project" value="EcoliWiki"/>
</dbReference>
<dbReference type="GO" id="GO:0045271">
    <property type="term" value="C:respiratory chain complex I"/>
    <property type="evidence" value="ECO:0000314"/>
    <property type="project" value="EcoCyc"/>
</dbReference>
<dbReference type="GO" id="GO:0051539">
    <property type="term" value="F:4 iron, 4 sulfur cluster binding"/>
    <property type="evidence" value="ECO:0000315"/>
    <property type="project" value="EcoCyc"/>
</dbReference>
<dbReference type="GO" id="GO:0010181">
    <property type="term" value="F:FMN binding"/>
    <property type="evidence" value="ECO:0000250"/>
    <property type="project" value="EcoCyc"/>
</dbReference>
<dbReference type="GO" id="GO:0046872">
    <property type="term" value="F:metal ion binding"/>
    <property type="evidence" value="ECO:0007669"/>
    <property type="project" value="UniProtKB-KW"/>
</dbReference>
<dbReference type="GO" id="GO:0051287">
    <property type="term" value="F:NAD binding"/>
    <property type="evidence" value="ECO:0000315"/>
    <property type="project" value="EcoCyc"/>
</dbReference>
<dbReference type="GO" id="GO:0008137">
    <property type="term" value="F:NADH dehydrogenase (ubiquinone) activity"/>
    <property type="evidence" value="ECO:0007669"/>
    <property type="project" value="InterPro"/>
</dbReference>
<dbReference type="GO" id="GO:0048038">
    <property type="term" value="F:quinone binding"/>
    <property type="evidence" value="ECO:0007669"/>
    <property type="project" value="UniProtKB-KW"/>
</dbReference>
<dbReference type="GO" id="GO:0009060">
    <property type="term" value="P:aerobic respiration"/>
    <property type="evidence" value="ECO:0000315"/>
    <property type="project" value="EcoCyc"/>
</dbReference>
<dbReference type="GO" id="GO:0045333">
    <property type="term" value="P:cellular respiration"/>
    <property type="evidence" value="ECO:0000318"/>
    <property type="project" value="GO_Central"/>
</dbReference>
<dbReference type="GO" id="GO:0022904">
    <property type="term" value="P:respiratory electron transport chain"/>
    <property type="evidence" value="ECO:0000314"/>
    <property type="project" value="ComplexPortal"/>
</dbReference>
<dbReference type="FunFam" id="3.40.50.11540:FF:000001">
    <property type="entry name" value="NADH dehydrogenase [ubiquinone] flavoprotein 1, mitochondrial"/>
    <property type="match status" value="1"/>
</dbReference>
<dbReference type="FunFam" id="1.20.1440.230:FF:000002">
    <property type="entry name" value="NADH-quinone oxidoreductase subunit F"/>
    <property type="match status" value="1"/>
</dbReference>
<dbReference type="FunFam" id="3.10.20.600:FF:000002">
    <property type="entry name" value="NADH-quinone oxidoreductase subunit F"/>
    <property type="match status" value="1"/>
</dbReference>
<dbReference type="Gene3D" id="3.10.20.600">
    <property type="match status" value="1"/>
</dbReference>
<dbReference type="Gene3D" id="6.10.250.1450">
    <property type="match status" value="1"/>
</dbReference>
<dbReference type="Gene3D" id="3.40.50.11540">
    <property type="entry name" value="NADH-ubiquinone oxidoreductase 51kDa subunit"/>
    <property type="match status" value="1"/>
</dbReference>
<dbReference type="Gene3D" id="1.20.1440.230">
    <property type="entry name" value="NADH-ubiquinone oxidoreductase 51kDa subunit, iron-sulphur binding domain"/>
    <property type="match status" value="1"/>
</dbReference>
<dbReference type="InterPro" id="IPR001949">
    <property type="entry name" value="NADH-UbQ_OxRdtase_51kDa_CS"/>
</dbReference>
<dbReference type="InterPro" id="IPR011537">
    <property type="entry name" value="NADH-UbQ_OxRdtase_suF"/>
</dbReference>
<dbReference type="InterPro" id="IPR011538">
    <property type="entry name" value="Nuo51_FMN-bd"/>
</dbReference>
<dbReference type="InterPro" id="IPR037225">
    <property type="entry name" value="Nuo51_FMN-bd_sf"/>
</dbReference>
<dbReference type="InterPro" id="IPR019575">
    <property type="entry name" value="Nuop51_4Fe4S-bd"/>
</dbReference>
<dbReference type="InterPro" id="IPR037207">
    <property type="entry name" value="Nuop51_4Fe4S-bd_sf"/>
</dbReference>
<dbReference type="NCBIfam" id="TIGR01959">
    <property type="entry name" value="nuoF_fam"/>
    <property type="match status" value="1"/>
</dbReference>
<dbReference type="NCBIfam" id="NF008436">
    <property type="entry name" value="PRK11278.1"/>
    <property type="match status" value="1"/>
</dbReference>
<dbReference type="NCBIfam" id="NF010120">
    <property type="entry name" value="PRK13596.1"/>
    <property type="match status" value="1"/>
</dbReference>
<dbReference type="PANTHER" id="PTHR43578">
    <property type="entry name" value="NADH-QUINONE OXIDOREDUCTASE SUBUNIT F"/>
    <property type="match status" value="1"/>
</dbReference>
<dbReference type="PANTHER" id="PTHR43578:SF3">
    <property type="entry name" value="NADH-QUINONE OXIDOREDUCTASE SUBUNIT F"/>
    <property type="match status" value="1"/>
</dbReference>
<dbReference type="Pfam" id="PF01512">
    <property type="entry name" value="Complex1_51K"/>
    <property type="match status" value="1"/>
</dbReference>
<dbReference type="Pfam" id="PF10589">
    <property type="entry name" value="NADH_4Fe-4S"/>
    <property type="match status" value="1"/>
</dbReference>
<dbReference type="SMART" id="SM00928">
    <property type="entry name" value="NADH_4Fe-4S"/>
    <property type="match status" value="1"/>
</dbReference>
<dbReference type="SUPFAM" id="SSF142019">
    <property type="entry name" value="Nqo1 FMN-binding domain-like"/>
    <property type="match status" value="1"/>
</dbReference>
<dbReference type="SUPFAM" id="SSF142984">
    <property type="entry name" value="Nqo1 middle domain-like"/>
    <property type="match status" value="1"/>
</dbReference>
<dbReference type="SUPFAM" id="SSF140490">
    <property type="entry name" value="Nqo1C-terminal domain-like"/>
    <property type="match status" value="1"/>
</dbReference>
<dbReference type="PROSITE" id="PS00644">
    <property type="entry name" value="COMPLEX1_51K_1"/>
    <property type="match status" value="1"/>
</dbReference>
<dbReference type="PROSITE" id="PS00645">
    <property type="entry name" value="COMPLEX1_51K_2"/>
    <property type="match status" value="1"/>
</dbReference>
<protein>
    <recommendedName>
        <fullName>NADH-quinone oxidoreductase subunit F</fullName>
        <ecNumber>7.1.1.-</ecNumber>
    </recommendedName>
    <alternativeName>
        <fullName>NADH dehydrogenase I subunit F</fullName>
    </alternativeName>
    <alternativeName>
        <fullName>NDH-1 subunit F</fullName>
    </alternativeName>
    <alternativeName>
        <fullName>NUO6</fullName>
    </alternativeName>
</protein>
<name>NUOF_ECOLI</name>
<organism>
    <name type="scientific">Escherichia coli (strain K12)</name>
    <dbReference type="NCBI Taxonomy" id="83333"/>
    <lineage>
        <taxon>Bacteria</taxon>
        <taxon>Pseudomonadati</taxon>
        <taxon>Pseudomonadota</taxon>
        <taxon>Gammaproteobacteria</taxon>
        <taxon>Enterobacterales</taxon>
        <taxon>Enterobacteriaceae</taxon>
        <taxon>Escherichia</taxon>
    </lineage>
</organism>
<gene>
    <name type="primary">nuoF</name>
    <name type="ordered locus">b2284</name>
    <name type="ordered locus">JW2279</name>
</gene>
<accession>P31979</accession>
<accession>P78239</accession>
<sequence length="445" mass="49292">MKNIIRTPETHPLTWRLRDDKQPVWLDEYRSKNGYEGARKALTGLSPDEIVNQVKDAGLKGRGGAGFSTGLKWSLMPKDESMNIRYLLCNADEMEPGTYKDRLLMEQLPHLLVEGMLISAFALKAYRGYIFLRGEYIEAAVNLRRAIAEATEAGLLGKNIMGTGFDFELFVHTGAGRYICGEETALINSLEGRRANPRSKPPFPATSGAWGKPTCVNNVETLCNVPAILANGVEWYQNISKSKDAGTKLMGFSGRVKNPGLWELPFGTTAREILEDYAGGMRDGLKFKAWQPGGAGTDFLTEAHLDLPMEFESIGKAGSRLGTALAMAVDHEINMVSLVRNLEEFFARESCGWCTPCRDGLPWSVKILRALERGEGQPGDIETLEQLCRFLGPGKTFCAHAPGAVEPLQSAIKYFREEFEAGIKQPFSNTHLINGIQPNLLKERW</sequence>
<evidence type="ECO:0000250" key="1"/>
<evidence type="ECO:0000255" key="2"/>
<evidence type="ECO:0000305" key="3"/>
<evidence type="ECO:0007829" key="4">
    <source>
        <dbReference type="PDB" id="7AWT"/>
    </source>
</evidence>
<evidence type="ECO:0007829" key="5">
    <source>
        <dbReference type="PDB" id="7NZ1"/>
    </source>
</evidence>
<evidence type="ECO:0007829" key="6">
    <source>
        <dbReference type="PDB" id="7P61"/>
    </source>
</evidence>
<evidence type="ECO:0007829" key="7">
    <source>
        <dbReference type="PDB" id="7P7J"/>
    </source>
</evidence>
<evidence type="ECO:0007829" key="8">
    <source>
        <dbReference type="PDB" id="7Z7V"/>
    </source>
</evidence>
<comment type="function">
    <text>NDH-1 shuttles electrons from NADH, via FMN and iron-sulfur (Fe-S) centers, to quinones in the respiratory chain. The immediate electron acceptor for the enzyme in this species is believed to be ubiquinone. Couples the redox reaction to proton translocation (for every two electrons transferred, four hydrogen ions are translocated across the cytoplasmic membrane), and thus conserves the redox energy in a proton gradient.</text>
</comment>
<comment type="catalytic activity">
    <reaction>
        <text>a quinone + NADH + 5 H(+)(in) = a quinol + NAD(+) + 4 H(+)(out)</text>
        <dbReference type="Rhea" id="RHEA:57888"/>
        <dbReference type="ChEBI" id="CHEBI:15378"/>
        <dbReference type="ChEBI" id="CHEBI:24646"/>
        <dbReference type="ChEBI" id="CHEBI:57540"/>
        <dbReference type="ChEBI" id="CHEBI:57945"/>
        <dbReference type="ChEBI" id="CHEBI:132124"/>
    </reaction>
</comment>
<comment type="cofactor">
    <cofactor evidence="3">
        <name>FMN</name>
        <dbReference type="ChEBI" id="CHEBI:58210"/>
    </cofactor>
    <text evidence="3">Binds 1 FMN.</text>
</comment>
<comment type="cofactor">
    <cofactor evidence="3">
        <name>[4Fe-4S] cluster</name>
        <dbReference type="ChEBI" id="CHEBI:49883"/>
    </cofactor>
    <text evidence="3">Binds 1 [4Fe-4S] cluster.</text>
</comment>
<comment type="subunit">
    <text>Composed of 13 different subunits. Subunits NuoCD, E, F, and G constitute the peripheral sector of the complex.</text>
</comment>
<comment type="similarity">
    <text evidence="3">Belongs to the complex I 51 kDa subunit family.</text>
</comment>
<proteinExistence type="evidence at protein level"/>
<keyword id="KW-0002">3D-structure</keyword>
<keyword id="KW-0004">4Fe-4S</keyword>
<keyword id="KW-0903">Direct protein sequencing</keyword>
<keyword id="KW-0285">Flavoprotein</keyword>
<keyword id="KW-0288">FMN</keyword>
<keyword id="KW-0408">Iron</keyword>
<keyword id="KW-0411">Iron-sulfur</keyword>
<keyword id="KW-0479">Metal-binding</keyword>
<keyword id="KW-0520">NAD</keyword>
<keyword id="KW-0874">Quinone</keyword>
<keyword id="KW-1185">Reference proteome</keyword>
<keyword id="KW-1278">Translocase</keyword>
<keyword id="KW-0830">Ubiquinone</keyword>
<reference key="1">
    <citation type="journal article" date="1993" name="J. Mol. Biol.">
        <title>The gene locus of the proton-translocating NADH: ubiquinone oxidoreductase in Escherichia coli. Organization of the 14 genes and relationship between the derived proteins and subunits of mitochondrial complex I.</title>
        <authorList>
            <person name="Weidner U."/>
            <person name="Geier S."/>
            <person name="Ptock A."/>
            <person name="Friedrich T."/>
            <person name="Leif H."/>
            <person name="Weiss H."/>
        </authorList>
    </citation>
    <scope>NUCLEOTIDE SEQUENCE [GENOMIC DNA]</scope>
    <source>
        <strain>K12 / AN387</strain>
    </source>
</reference>
<reference key="2">
    <citation type="journal article" date="1994" name="J. Bacteriol.">
        <title>Mutations in NADH:ubiquinone oxidoreductase of Escherichia coli affect growth on mixed amino acids.</title>
        <authorList>
            <person name="Pruss B.M."/>
            <person name="Nelms J.M."/>
            <person name="Park C."/>
            <person name="Wolfe A.J."/>
        </authorList>
    </citation>
    <scope>NUCLEOTIDE SEQUENCE [GENOMIC DNA]</scope>
</reference>
<reference key="3">
    <citation type="journal article" date="1997" name="DNA Res.">
        <title>Construction of a contiguous 874-kb sequence of the Escherichia coli-K12 genome corresponding to 50.0-68.8 min on the linkage map and analysis of its sequence features.</title>
        <authorList>
            <person name="Yamamoto Y."/>
            <person name="Aiba H."/>
            <person name="Baba T."/>
            <person name="Hayashi K."/>
            <person name="Inada T."/>
            <person name="Isono K."/>
            <person name="Itoh T."/>
            <person name="Kimura S."/>
            <person name="Kitagawa M."/>
            <person name="Makino K."/>
            <person name="Miki T."/>
            <person name="Mitsuhashi N."/>
            <person name="Mizobuchi K."/>
            <person name="Mori H."/>
            <person name="Nakade S."/>
            <person name="Nakamura Y."/>
            <person name="Nashimoto H."/>
            <person name="Oshima T."/>
            <person name="Oyama S."/>
            <person name="Saito N."/>
            <person name="Sampei G."/>
            <person name="Satoh Y."/>
            <person name="Sivasundaram S."/>
            <person name="Tagami H."/>
            <person name="Takahashi H."/>
            <person name="Takeda J."/>
            <person name="Takemoto K."/>
            <person name="Uehara K."/>
            <person name="Wada C."/>
            <person name="Yamagata S."/>
            <person name="Horiuchi T."/>
        </authorList>
    </citation>
    <scope>NUCLEOTIDE SEQUENCE [LARGE SCALE GENOMIC DNA]</scope>
    <source>
        <strain>K12 / W3110 / ATCC 27325 / DSM 5911</strain>
    </source>
</reference>
<reference key="4">
    <citation type="journal article" date="1997" name="Science">
        <title>The complete genome sequence of Escherichia coli K-12.</title>
        <authorList>
            <person name="Blattner F.R."/>
            <person name="Plunkett G. III"/>
            <person name="Bloch C.A."/>
            <person name="Perna N.T."/>
            <person name="Burland V."/>
            <person name="Riley M."/>
            <person name="Collado-Vides J."/>
            <person name="Glasner J.D."/>
            <person name="Rode C.K."/>
            <person name="Mayhew G.F."/>
            <person name="Gregor J."/>
            <person name="Davis N.W."/>
            <person name="Kirkpatrick H.A."/>
            <person name="Goeden M.A."/>
            <person name="Rose D.J."/>
            <person name="Mau B."/>
            <person name="Shao Y."/>
        </authorList>
    </citation>
    <scope>NUCLEOTIDE SEQUENCE [LARGE SCALE GENOMIC DNA]</scope>
    <source>
        <strain>K12 / MG1655 / ATCC 47076</strain>
    </source>
</reference>
<reference key="5">
    <citation type="journal article" date="2006" name="Mol. Syst. Biol.">
        <title>Highly accurate genome sequences of Escherichia coli K-12 strains MG1655 and W3110.</title>
        <authorList>
            <person name="Hayashi K."/>
            <person name="Morooka N."/>
            <person name="Yamamoto Y."/>
            <person name="Fujita K."/>
            <person name="Isono K."/>
            <person name="Choi S."/>
            <person name="Ohtsubo E."/>
            <person name="Baba T."/>
            <person name="Wanner B.L."/>
            <person name="Mori H."/>
            <person name="Horiuchi T."/>
        </authorList>
    </citation>
    <scope>NUCLEOTIDE SEQUENCE [LARGE SCALE GENOMIC DNA]</scope>
    <source>
        <strain>K12 / W3110 / ATCC 27325 / DSM 5911</strain>
    </source>
</reference>
<reference key="6">
    <citation type="journal article" date="1993" name="J. Bacteriol.">
        <title>Escherichia coli mutants lacking NADH dehydrogenase I have a competitive disadvantage in stationary phase.</title>
        <authorList>
            <person name="Zambrano M.M."/>
            <person name="Kolter R.G."/>
        </authorList>
    </citation>
    <scope>NUCLEOTIDE SEQUENCE [GENOMIC DNA] OF 3-114</scope>
    <source>
        <strain>K12 / W3110 / ATCC 27325 / DSM 5911</strain>
    </source>
</reference>
<reference key="7">
    <citation type="journal article" date="1995" name="Eur. J. Biochem.">
        <title>Isolation and characterization of the proton-translocating NADH: ubiquinone oxidoreductase from Escherichia coli.</title>
        <authorList>
            <person name="Leif H."/>
            <person name="Sled V.D."/>
            <person name="Ohnishi T."/>
            <person name="Weiss H."/>
            <person name="Friedrich T."/>
        </authorList>
    </citation>
    <scope>PROTEIN SEQUENCE OF 1-9</scope>
</reference>